<proteinExistence type="evidence at protein level"/>
<dbReference type="EMBL" id="U28043">
    <property type="protein sequence ID" value="AAB48990.1"/>
    <property type="molecule type" value="mRNA"/>
</dbReference>
<dbReference type="EMBL" id="AC010442">
    <property type="status" value="NOT_ANNOTATED_CDS"/>
    <property type="molecule type" value="Genomic_DNA"/>
</dbReference>
<dbReference type="EMBL" id="AC106772">
    <property type="status" value="NOT_ANNOTATED_CDS"/>
    <property type="molecule type" value="Genomic_DNA"/>
</dbReference>
<dbReference type="EMBL" id="BC101669">
    <property type="protein sequence ID" value="AAI01670.1"/>
    <property type="molecule type" value="mRNA"/>
</dbReference>
<dbReference type="EMBL" id="BC101671">
    <property type="protein sequence ID" value="AAI01672.1"/>
    <property type="molecule type" value="mRNA"/>
</dbReference>
<dbReference type="EMBL" id="BC143328">
    <property type="protein sequence ID" value="AAI43329.1"/>
    <property type="molecule type" value="mRNA"/>
</dbReference>
<dbReference type="CCDS" id="CCDS3855.1">
    <molecule id="P48764-1"/>
</dbReference>
<dbReference type="CCDS" id="CCDS64116.1">
    <molecule id="P48764-2"/>
</dbReference>
<dbReference type="PIR" id="B40205">
    <property type="entry name" value="B40205"/>
</dbReference>
<dbReference type="RefSeq" id="NP_001271280.1">
    <molecule id="P48764-2"/>
    <property type="nucleotide sequence ID" value="NM_001284351.3"/>
</dbReference>
<dbReference type="RefSeq" id="NP_004165.2">
    <molecule id="P48764-1"/>
    <property type="nucleotide sequence ID" value="NM_004174.4"/>
</dbReference>
<dbReference type="PDB" id="7X2U">
    <property type="method" value="EM"/>
    <property type="resolution" value="3.20 A"/>
    <property type="chains" value="A/B=40-665"/>
</dbReference>
<dbReference type="PDBsum" id="7X2U"/>
<dbReference type="EMDB" id="EMD-32971"/>
<dbReference type="SMR" id="P48764"/>
<dbReference type="BioGRID" id="112440">
    <property type="interactions" value="15"/>
</dbReference>
<dbReference type="CORUM" id="P48764"/>
<dbReference type="FunCoup" id="P48764">
    <property type="interactions" value="156"/>
</dbReference>
<dbReference type="IntAct" id="P48764">
    <property type="interactions" value="2"/>
</dbReference>
<dbReference type="MINT" id="P48764"/>
<dbReference type="STRING" id="9606.ENSP00000264938"/>
<dbReference type="BindingDB" id="P48764"/>
<dbReference type="ChEMBL" id="CHEMBL3273"/>
<dbReference type="DrugBank" id="DB06468">
    <property type="generic name" value="Cariporide"/>
</dbReference>
<dbReference type="DrugBank" id="DB11761">
    <property type="generic name" value="Tenapanor"/>
</dbReference>
<dbReference type="DrugCentral" id="P48764"/>
<dbReference type="TCDB" id="2.A.36.1.15">
    <property type="family name" value="the monovalent cation:proton antiporter-1 (cpa1) family"/>
</dbReference>
<dbReference type="GlyCosmos" id="P48764">
    <property type="glycosylation" value="2 sites, No reported glycans"/>
</dbReference>
<dbReference type="GlyGen" id="P48764">
    <property type="glycosylation" value="1 site"/>
</dbReference>
<dbReference type="iPTMnet" id="P48764"/>
<dbReference type="PhosphoSitePlus" id="P48764"/>
<dbReference type="BioMuta" id="SLC9A3"/>
<dbReference type="DMDM" id="269849652"/>
<dbReference type="MassIVE" id="P48764"/>
<dbReference type="PaxDb" id="9606-ENSP00000264938"/>
<dbReference type="PeptideAtlas" id="P48764"/>
<dbReference type="ProteomicsDB" id="20040"/>
<dbReference type="ProteomicsDB" id="55946">
    <molecule id="P48764-1"/>
</dbReference>
<dbReference type="Antibodypedia" id="22241">
    <property type="antibodies" value="332 antibodies from 26 providers"/>
</dbReference>
<dbReference type="DNASU" id="6550"/>
<dbReference type="Ensembl" id="ENST00000264938.8">
    <molecule id="P48764-1"/>
    <property type="protein sequence ID" value="ENSP00000264938.3"/>
    <property type="gene ID" value="ENSG00000066230.12"/>
</dbReference>
<dbReference type="Ensembl" id="ENST00000514375.1">
    <molecule id="P48764-2"/>
    <property type="protein sequence ID" value="ENSP00000422983.1"/>
    <property type="gene ID" value="ENSG00000066230.12"/>
</dbReference>
<dbReference type="GeneID" id="6550"/>
<dbReference type="KEGG" id="hsa:6550"/>
<dbReference type="MANE-Select" id="ENST00000264938.8">
    <property type="protein sequence ID" value="ENSP00000264938.3"/>
    <property type="RefSeq nucleotide sequence ID" value="NM_004174.4"/>
    <property type="RefSeq protein sequence ID" value="NP_004165.2"/>
</dbReference>
<dbReference type="UCSC" id="uc003jbe.3">
    <molecule id="P48764-1"/>
    <property type="organism name" value="human"/>
</dbReference>
<dbReference type="AGR" id="HGNC:11073"/>
<dbReference type="CTD" id="6550"/>
<dbReference type="DisGeNET" id="6550"/>
<dbReference type="GeneCards" id="SLC9A3"/>
<dbReference type="HGNC" id="HGNC:11073">
    <property type="gene designation" value="SLC9A3"/>
</dbReference>
<dbReference type="HPA" id="ENSG00000066230">
    <property type="expression patterns" value="Tissue enhanced (gallbladder, intestine, kidney, stomach)"/>
</dbReference>
<dbReference type="MalaCards" id="SLC9A3"/>
<dbReference type="MIM" id="182307">
    <property type="type" value="gene"/>
</dbReference>
<dbReference type="MIM" id="616868">
    <property type="type" value="phenotype"/>
</dbReference>
<dbReference type="neXtProt" id="NX_P48764"/>
<dbReference type="OpenTargets" id="ENSG00000066230"/>
<dbReference type="Orphanet" id="103908">
    <property type="disease" value="Congenital sodium diarrhea"/>
</dbReference>
<dbReference type="Orphanet" id="586">
    <property type="disease" value="Cystic fibrosis"/>
</dbReference>
<dbReference type="PharmGKB" id="PA316"/>
<dbReference type="VEuPathDB" id="HostDB:ENSG00000066230"/>
<dbReference type="eggNOG" id="KOG1966">
    <property type="taxonomic scope" value="Eukaryota"/>
</dbReference>
<dbReference type="GeneTree" id="ENSGT00940000158616"/>
<dbReference type="HOGENOM" id="CLU_005912_4_2_1"/>
<dbReference type="InParanoid" id="P48764"/>
<dbReference type="OMA" id="NPEIWTW"/>
<dbReference type="OrthoDB" id="196264at2759"/>
<dbReference type="PAN-GO" id="P48764">
    <property type="GO annotations" value="8 GO annotations based on evolutionary models"/>
</dbReference>
<dbReference type="PhylomeDB" id="P48764"/>
<dbReference type="TreeFam" id="TF317212"/>
<dbReference type="PathwayCommons" id="P48764"/>
<dbReference type="Reactome" id="R-HSA-425986">
    <property type="pathway name" value="Sodium/Proton exchangers"/>
</dbReference>
<dbReference type="SignaLink" id="P48764"/>
<dbReference type="SIGNOR" id="P48764"/>
<dbReference type="BioGRID-ORCS" id="6550">
    <property type="hits" value="27 hits in 1150 CRISPR screens"/>
</dbReference>
<dbReference type="GeneWiki" id="Sodium%E2%80%93hydrogen_antiporter_3"/>
<dbReference type="GenomeRNAi" id="6550"/>
<dbReference type="Pharos" id="P48764">
    <property type="development level" value="Tclin"/>
</dbReference>
<dbReference type="PRO" id="PR:P48764"/>
<dbReference type="Proteomes" id="UP000005640">
    <property type="component" value="Chromosome 5"/>
</dbReference>
<dbReference type="RNAct" id="P48764">
    <property type="molecule type" value="protein"/>
</dbReference>
<dbReference type="Bgee" id="ENSG00000066230">
    <property type="expression patterns" value="Expressed in mucosa of transverse colon and 92 other cell types or tissues"/>
</dbReference>
<dbReference type="ExpressionAtlas" id="P48764">
    <property type="expression patterns" value="baseline and differential"/>
</dbReference>
<dbReference type="GO" id="GO:0016324">
    <property type="term" value="C:apical plasma membrane"/>
    <property type="evidence" value="ECO:0000250"/>
    <property type="project" value="UniProtKB"/>
</dbReference>
<dbReference type="GO" id="GO:0005903">
    <property type="term" value="C:brush border"/>
    <property type="evidence" value="ECO:0000250"/>
    <property type="project" value="UniProtKB"/>
</dbReference>
<dbReference type="GO" id="GO:0031526">
    <property type="term" value="C:brush border membrane"/>
    <property type="evidence" value="ECO:0000250"/>
    <property type="project" value="UniProtKB"/>
</dbReference>
<dbReference type="GO" id="GO:0009986">
    <property type="term" value="C:cell surface"/>
    <property type="evidence" value="ECO:0000250"/>
    <property type="project" value="UniProtKB"/>
</dbReference>
<dbReference type="GO" id="GO:0005769">
    <property type="term" value="C:early endosome"/>
    <property type="evidence" value="ECO:0000314"/>
    <property type="project" value="UniProtKB"/>
</dbReference>
<dbReference type="GO" id="GO:0031901">
    <property type="term" value="C:early endosome membrane"/>
    <property type="evidence" value="ECO:0007669"/>
    <property type="project" value="UniProtKB-SubCell"/>
</dbReference>
<dbReference type="GO" id="GO:0070062">
    <property type="term" value="C:extracellular exosome"/>
    <property type="evidence" value="ECO:0000314"/>
    <property type="project" value="UniProtKB"/>
</dbReference>
<dbReference type="GO" id="GO:0005886">
    <property type="term" value="C:plasma membrane"/>
    <property type="evidence" value="ECO:0000314"/>
    <property type="project" value="HPA"/>
</dbReference>
<dbReference type="GO" id="GO:0055038">
    <property type="term" value="C:recycling endosome membrane"/>
    <property type="evidence" value="ECO:0000314"/>
    <property type="project" value="UniProtKB"/>
</dbReference>
<dbReference type="GO" id="GO:0042802">
    <property type="term" value="F:identical protein binding"/>
    <property type="evidence" value="ECO:0000314"/>
    <property type="project" value="UniProtKB"/>
</dbReference>
<dbReference type="GO" id="GO:0030165">
    <property type="term" value="F:PDZ domain binding"/>
    <property type="evidence" value="ECO:0000250"/>
    <property type="project" value="UniProtKB"/>
</dbReference>
<dbReference type="GO" id="GO:0035091">
    <property type="term" value="F:phosphatidylinositol binding"/>
    <property type="evidence" value="ECO:0000314"/>
    <property type="project" value="UniProtKB"/>
</dbReference>
<dbReference type="GO" id="GO:0015386">
    <property type="term" value="F:potassium:proton antiporter activity"/>
    <property type="evidence" value="ECO:0000318"/>
    <property type="project" value="GO_Central"/>
</dbReference>
<dbReference type="GO" id="GO:0015385">
    <property type="term" value="F:sodium:proton antiporter activity"/>
    <property type="evidence" value="ECO:0000314"/>
    <property type="project" value="UniProtKB"/>
</dbReference>
<dbReference type="GO" id="GO:0006811">
    <property type="term" value="P:monoatomic ion transport"/>
    <property type="evidence" value="ECO:0000304"/>
    <property type="project" value="Reactome"/>
</dbReference>
<dbReference type="GO" id="GO:0071805">
    <property type="term" value="P:potassium ion transmembrane transport"/>
    <property type="evidence" value="ECO:0000318"/>
    <property type="project" value="GO_Central"/>
</dbReference>
<dbReference type="GO" id="GO:0051453">
    <property type="term" value="P:regulation of intracellular pH"/>
    <property type="evidence" value="ECO:0000314"/>
    <property type="project" value="UniProtKB"/>
</dbReference>
<dbReference type="GO" id="GO:0098719">
    <property type="term" value="P:sodium ion import across plasma membrane"/>
    <property type="evidence" value="ECO:0000314"/>
    <property type="project" value="UniProtKB"/>
</dbReference>
<dbReference type="Gene3D" id="6.10.140.1330">
    <property type="match status" value="1"/>
</dbReference>
<dbReference type="InterPro" id="IPR018422">
    <property type="entry name" value="Cation/H_exchanger_CPA1"/>
</dbReference>
<dbReference type="InterPro" id="IPR006153">
    <property type="entry name" value="Cation/H_exchanger_TM"/>
</dbReference>
<dbReference type="InterPro" id="IPR018410">
    <property type="entry name" value="Na/H_exchanger_3/5"/>
</dbReference>
<dbReference type="InterPro" id="IPR004709">
    <property type="entry name" value="NaH_exchanger"/>
</dbReference>
<dbReference type="NCBIfam" id="TIGR00840">
    <property type="entry name" value="b_cpa1"/>
    <property type="match status" value="1"/>
</dbReference>
<dbReference type="PANTHER" id="PTHR10110">
    <property type="entry name" value="SODIUM/HYDROGEN EXCHANGER"/>
    <property type="match status" value="1"/>
</dbReference>
<dbReference type="PANTHER" id="PTHR10110:SF90">
    <property type="entry name" value="SODIUM_HYDROGEN EXCHANGER 3"/>
    <property type="match status" value="1"/>
</dbReference>
<dbReference type="Pfam" id="PF00999">
    <property type="entry name" value="Na_H_Exchanger"/>
    <property type="match status" value="1"/>
</dbReference>
<dbReference type="PRINTS" id="PR01084">
    <property type="entry name" value="NAHEXCHNGR"/>
</dbReference>
<dbReference type="PRINTS" id="PR01087">
    <property type="entry name" value="NAHEXCHNGR3"/>
</dbReference>
<comment type="function">
    <text evidence="1 8 11 13 15">Plasma membrane Na(+)/H(+) antiporter (PubMed:18829453, PubMed:26358773, PubMed:35613257). Exchanges intracellular H(+) ions for extracellular Na(+) in 1:1 stoichiometry, playing a key role in salt and fluid absorption and pH homeostasis (By similarity). Major apical Na(+)/H(+) exchanger in kidney and intestine playing an important role in renal and intestine Na(+) absorption and blood pressure regulation (PubMed:24622516, PubMed:26358773).</text>
</comment>
<comment type="catalytic activity">
    <reaction evidence="8 13 15">
        <text>Na(+)(in) + H(+)(out) = Na(+)(out) + H(+)(in)</text>
        <dbReference type="Rhea" id="RHEA:29419"/>
        <dbReference type="ChEBI" id="CHEBI:15378"/>
        <dbReference type="ChEBI" id="CHEBI:29101"/>
    </reaction>
</comment>
<comment type="activity regulation">
    <text evidence="8 11 12 15">Seems to switch between active and inactive modes in response to various stimuli (PubMed:35613257). Activated directly or indirectly by membrane phosphatidylinositol (PIs) (PubMed:35613257). Regulated by a variety of auxiliary proteins, which facilitate the maturation, cell surface expression and function of the transporter (PubMed:18829453, PubMed:25851603, PubMed:35613257). Inhibited specifically by the drug tenapanor (PubMed:24622516).</text>
</comment>
<comment type="subunit">
    <text evidence="2 3 4 8 9 10 12 15">Homodimer (PubMed:35613257). Found in the forms of complex and dynamic macromolecular complexes (By similarity). Binds NHERF1 and NHERF2 (By similarity). Interacts with CHP1; increases SLC9A3 trafficking and activity at the plasma membrane (PubMed:35613257). Interacts with CHP2 and SHANK2. Interacts with PDZK1 (via C-terminal PDZ domain) (By similarity). Interacts with NHERF4 and interaction decrease in response to elevated calcium ion levels. Interacts with AHCYL1; the interaction is required for SLC9A3 activity (PubMed:18829453, PubMed:20584908). Interacts with SNX27 (via PDZ domains); directs SLC9A3 membrane insertion from early endosomes to the plasma membrane (PubMed:25851603). Interacts with EZR; interaction targets SLC9A3 to the apical membrane (By similarity).</text>
</comment>
<comment type="interaction">
    <interactant intactId="EBI-7816923">
        <id>P48764</id>
    </interactant>
    <interactant intactId="EBI-493777">
        <id>Q6P0Q8</id>
        <label>MAST2</label>
    </interactant>
    <organismsDiffer>false</organismsDiffer>
    <experiments>2</experiments>
</comment>
<comment type="subcellular location">
    <subcellularLocation>
        <location evidence="9 13">Apical cell membrane</location>
        <topology evidence="15">Multi-pass membrane protein</topology>
    </subcellularLocation>
    <subcellularLocation>
        <location evidence="12 15">Cell membrane</location>
        <topology evidence="15">Multi-pass membrane protein</topology>
    </subcellularLocation>
    <subcellularLocation>
        <location evidence="15">Recycling endosome membrane</location>
        <topology evidence="15">Multi-pass membrane protein</topology>
    </subcellularLocation>
    <subcellularLocation>
        <location evidence="12">Early endosome membrane</location>
        <topology evidence="15">Multi-pass membrane protein</topology>
    </subcellularLocation>
    <text evidence="4">In intestinal epithelial cells, localizes to the ileal brush border. Phosphorylation at Ser-663 by SGK1 is associated with increased abundance at the cell membrane. Angiotensin-2 enhances apical expression (By similarity).</text>
</comment>
<comment type="alternative products">
    <event type="alternative splicing"/>
    <isoform>
        <id>P48764-1</id>
        <name>1</name>
        <sequence type="displayed"/>
    </isoform>
    <isoform>
        <id>P48764-2</id>
        <name>2</name>
        <sequence type="described" ref="VSP_053989"/>
    </isoform>
</comment>
<comment type="domain">
    <text evidence="8 9 12 15">The C-terminal intracellular domain is subject to extensive post-translational modifications and binding partner interactions which regulate transporter activity, scaffolding functions, downstream events and localization.</text>
</comment>
<comment type="PTM">
    <text evidence="2 3">Phosphorylated by PKA, which inhibits activity. Phosphorylation at Ser-663 by SGK1 is associated with increased abundance at the cell membrane. Phosphorylation at Ser-718 by CSNK2A1 regulates SLC9A3 activity through the formation of multiple signaling complexes (By similarity).</text>
</comment>
<comment type="disease" evidence="13 14">
    <disease id="DI-04683">
        <name>Diarrhea 8, secretory sodium, congenital</name>
        <acronym>DIAR8</acronym>
        <description>A disease characterized by watery secretory diarrhea with prenatal onset, prominent abdominal distension after birth due to dilated fluid-filled loops of intestine, elevated fecal sodium concentrations and low urinary sodium concentrations.</description>
        <dbReference type="MIM" id="616868"/>
    </disease>
    <text>The disease is caused by variants affecting the gene represented in this entry.</text>
</comment>
<comment type="similarity">
    <text evidence="19">Belongs to the monovalent cation:proton antiporter 1 (CPA1) transporter (TC 2.A.36) family.</text>
</comment>
<accession>P48764</accession>
<accession>B7ZKR2</accession>
<accession>E9PF67</accession>
<accession>Q3MIW3</accession>
<protein>
    <recommendedName>
        <fullName evidence="19">Sodium/hydrogen exchanger 3</fullName>
    </recommendedName>
    <alternativeName>
        <fullName evidence="18">Na(+)/H(+) exchanger 3</fullName>
        <shortName evidence="18">NHE-3</shortName>
    </alternativeName>
    <alternativeName>
        <fullName>Solute carrier family 9 member 3</fullName>
    </alternativeName>
</protein>
<keyword id="KW-0002">3D-structure</keyword>
<keyword id="KW-0025">Alternative splicing</keyword>
<keyword id="KW-0050">Antiport</keyword>
<keyword id="KW-1003">Cell membrane</keyword>
<keyword id="KW-0225">Disease variant</keyword>
<keyword id="KW-0967">Endosome</keyword>
<keyword id="KW-0325">Glycoprotein</keyword>
<keyword id="KW-0406">Ion transport</keyword>
<keyword id="KW-0472">Membrane</keyword>
<keyword id="KW-0597">Phosphoprotein</keyword>
<keyword id="KW-1267">Proteomics identification</keyword>
<keyword id="KW-1185">Reference proteome</keyword>
<keyword id="KW-0732">Signal</keyword>
<keyword id="KW-0915">Sodium</keyword>
<keyword id="KW-0739">Sodium transport</keyword>
<keyword id="KW-0812">Transmembrane</keyword>
<keyword id="KW-1133">Transmembrane helix</keyword>
<keyword id="KW-0813">Transport</keyword>
<evidence type="ECO:0000250" key="1">
    <source>
        <dbReference type="UniProtKB" id="G3X939"/>
    </source>
</evidence>
<evidence type="ECO:0000250" key="2">
    <source>
        <dbReference type="UniProtKB" id="P26432"/>
    </source>
</evidence>
<evidence type="ECO:0000250" key="3">
    <source>
        <dbReference type="UniProtKB" id="P26433"/>
    </source>
</evidence>
<evidence type="ECO:0000250" key="4">
    <source>
        <dbReference type="UniProtKB" id="Q28362"/>
    </source>
</evidence>
<evidence type="ECO:0000255" key="5"/>
<evidence type="ECO:0000256" key="6">
    <source>
        <dbReference type="SAM" id="MobiDB-lite"/>
    </source>
</evidence>
<evidence type="ECO:0000269" key="7">
    <source>
    </source>
</evidence>
<evidence type="ECO:0000269" key="8">
    <source>
    </source>
</evidence>
<evidence type="ECO:0000269" key="9">
    <source>
    </source>
</evidence>
<evidence type="ECO:0000269" key="10">
    <source>
    </source>
</evidence>
<evidence type="ECO:0000269" key="11">
    <source>
    </source>
</evidence>
<evidence type="ECO:0000269" key="12">
    <source>
    </source>
</evidence>
<evidence type="ECO:0000269" key="13">
    <source>
    </source>
</evidence>
<evidence type="ECO:0000269" key="14">
    <source>
    </source>
</evidence>
<evidence type="ECO:0000269" key="15">
    <source>
    </source>
</evidence>
<evidence type="ECO:0000269" key="16">
    <source>
    </source>
</evidence>
<evidence type="ECO:0000303" key="17">
    <source>
    </source>
</evidence>
<evidence type="ECO:0000303" key="18">
    <source>
    </source>
</evidence>
<evidence type="ECO:0000305" key="19"/>
<evidence type="ECO:0000312" key="20">
    <source>
        <dbReference type="HGNC" id="HGNC:11073"/>
    </source>
</evidence>
<evidence type="ECO:0000312" key="21">
    <source>
        <dbReference type="PDB" id="7X2U"/>
    </source>
</evidence>
<evidence type="ECO:0007744" key="22">
    <source>
        <dbReference type="PDB" id="7X2U"/>
    </source>
</evidence>
<evidence type="ECO:0007829" key="23">
    <source>
        <dbReference type="PDB" id="7X2U"/>
    </source>
</evidence>
<feature type="signal peptide" evidence="5">
    <location>
        <begin position="1"/>
        <end position="25"/>
    </location>
</feature>
<feature type="chain" id="PRO_0000052356" description="Sodium/hydrogen exchanger 3" evidence="5">
    <location>
        <begin position="26"/>
        <end position="834"/>
    </location>
</feature>
<feature type="topological domain" description="Extracellular" evidence="19">
    <location>
        <begin position="26"/>
        <end position="51"/>
    </location>
</feature>
<feature type="transmembrane region" description="Helical; Name=1" evidence="15 21">
    <location>
        <begin position="52"/>
        <end position="74"/>
    </location>
</feature>
<feature type="topological domain" description="Cytoplasmic" evidence="19">
    <location>
        <begin position="75"/>
        <end position="82"/>
    </location>
</feature>
<feature type="transmembrane region" description="Helical; Name=2" evidence="15 21">
    <location>
        <begin position="83"/>
        <end position="102"/>
    </location>
</feature>
<feature type="topological domain" description="Extracellular" evidence="19">
    <location>
        <begin position="103"/>
        <end position="111"/>
    </location>
</feature>
<feature type="transmembrane region" description="Helical; Name=3" evidence="15 21">
    <location>
        <begin position="112"/>
        <end position="129"/>
    </location>
</feature>
<feature type="topological domain" description="Cytoplasmic" evidence="19">
    <location>
        <begin position="130"/>
        <end position="132"/>
    </location>
</feature>
<feature type="transmembrane region" description="Helical; Name=4" evidence="15 21">
    <location>
        <begin position="133"/>
        <end position="168"/>
    </location>
</feature>
<feature type="topological domain" description="Extracellular" evidence="19">
    <location>
        <begin position="169"/>
        <end position="181"/>
    </location>
</feature>
<feature type="transmembrane region" description="Helical; Name=5" evidence="15 21">
    <location>
        <begin position="182"/>
        <end position="203"/>
    </location>
</feature>
<feature type="topological domain" description="Cytoplasmic" evidence="19">
    <location>
        <begin position="204"/>
        <end position="205"/>
    </location>
</feature>
<feature type="transmembrane region" description="Helical; Name=6" evidence="15 21">
    <location>
        <begin position="206"/>
        <end position="237"/>
    </location>
</feature>
<feature type="topological domain" description="Extracellular" evidence="19">
    <location>
        <begin position="238"/>
        <end position="244"/>
    </location>
</feature>
<feature type="transmembrane region" description="Helical; Name=7" evidence="15 21">
    <location>
        <begin position="245"/>
        <end position="279"/>
    </location>
</feature>
<feature type="topological domain" description="Cytoplasmic" evidence="19">
    <location>
        <begin position="280"/>
        <end position="281"/>
    </location>
</feature>
<feature type="transmembrane region" description="Helical; Name=8" evidence="15 21">
    <location>
        <begin position="282"/>
        <end position="304"/>
    </location>
</feature>
<feature type="topological domain" description="Extracellular" evidence="19">
    <location>
        <begin position="305"/>
        <end position="306"/>
    </location>
</feature>
<feature type="transmembrane region" description="Helical; Name=9" evidence="15 21">
    <location>
        <begin position="307"/>
        <end position="323"/>
    </location>
</feature>
<feature type="topological domain" description="Cytoplasmic" evidence="19">
    <location>
        <begin position="324"/>
        <end position="330"/>
    </location>
</feature>
<feature type="transmembrane region" description="Helical; Name=10" evidence="15 21">
    <location>
        <begin position="331"/>
        <end position="359"/>
    </location>
</feature>
<feature type="topological domain" description="Extracellular" evidence="19">
    <location>
        <begin position="360"/>
        <end position="367"/>
    </location>
</feature>
<feature type="transmembrane region" description="Helical; Name=11" evidence="15 21">
    <location>
        <begin position="368"/>
        <end position="389"/>
    </location>
</feature>
<feature type="topological domain" description="Cytoplasmic" evidence="19">
    <location>
        <begin position="390"/>
        <end position="402"/>
    </location>
</feature>
<feature type="transmembrane region" description="Helical; Name=12" evidence="15 21">
    <location>
        <begin position="403"/>
        <end position="426"/>
    </location>
</feature>
<feature type="topological domain" description="Extracellular" evidence="19">
    <location>
        <begin position="427"/>
        <end position="433"/>
    </location>
</feature>
<feature type="transmembrane region" description="Helical; Name=13" evidence="15 21">
    <location>
        <begin position="434"/>
        <end position="467"/>
    </location>
</feature>
<feature type="topological domain" description="Cytoplasmic" evidence="19">
    <location>
        <begin position="468"/>
        <end position="834"/>
    </location>
</feature>
<feature type="region of interest" description="Interaction with EZR" evidence="2">
    <location>
        <begin position="575"/>
        <end position="589"/>
    </location>
</feature>
<feature type="region of interest" description="Interaction with NHERF4" evidence="2">
    <location>
        <begin position="590"/>
        <end position="667"/>
    </location>
</feature>
<feature type="region of interest" description="Interaction with AHCYL1" evidence="2">
    <location>
        <begin position="591"/>
        <end position="695"/>
    </location>
</feature>
<feature type="region of interest" description="Disordered" evidence="6">
    <location>
        <begin position="679"/>
        <end position="728"/>
    </location>
</feature>
<feature type="region of interest" description="Disordered" evidence="6">
    <location>
        <begin position="814"/>
        <end position="834"/>
    </location>
</feature>
<feature type="compositionally biased region" description="Basic residues" evidence="6">
    <location>
        <begin position="679"/>
        <end position="691"/>
    </location>
</feature>
<feature type="compositionally biased region" description="Acidic residues" evidence="6">
    <location>
        <begin position="717"/>
        <end position="728"/>
    </location>
</feature>
<feature type="binding site" evidence="15 22">
    <location>
        <position position="138"/>
    </location>
    <ligand>
        <name>a 1,2-diacyl-sn-glycero-3-phospho-(1D-myo-inositol)</name>
        <dbReference type="ChEBI" id="CHEBI:57880"/>
    </ligand>
</feature>
<feature type="binding site" evidence="15 22">
    <location>
        <position position="141"/>
    </location>
    <ligand>
        <name>a 1,2-diacyl-sn-glycero-3-phospho-(1D-myo-inositol)</name>
        <dbReference type="ChEBI" id="CHEBI:57880"/>
    </ligand>
</feature>
<feature type="binding site" evidence="15 22">
    <location>
        <position position="142"/>
    </location>
    <ligand>
        <name>a 1,2-diacyl-sn-glycero-3-phospho-(1D-myo-inositol)</name>
        <dbReference type="ChEBI" id="CHEBI:57880"/>
    </ligand>
</feature>
<feature type="binding site" evidence="15 22">
    <location>
        <position position="398"/>
    </location>
    <ligand>
        <name>a 1,2-diacyl-sn-glycero-3-phospho-(1D-myo-inositol)</name>
        <dbReference type="ChEBI" id="CHEBI:57880"/>
    </ligand>
</feature>
<feature type="binding site" evidence="15 22">
    <location>
        <position position="497"/>
    </location>
    <ligand>
        <name>a 1,2-diacyl-sn-glycero-3-phospho-(1D-myo-inositol)</name>
        <dbReference type="ChEBI" id="CHEBI:57880"/>
    </ligand>
</feature>
<feature type="binding site" evidence="15 22">
    <location>
        <position position="498"/>
    </location>
    <ligand>
        <name>a 1,2-diacyl-sn-glycero-3-phospho-(1D-myo-inositol)</name>
        <dbReference type="ChEBI" id="CHEBI:57880"/>
    </ligand>
</feature>
<feature type="binding site" evidence="15 22">
    <location>
        <position position="500"/>
    </location>
    <ligand>
        <name>a 1,2-diacyl-sn-glycero-3-phospho-(1D-myo-inositol)</name>
        <dbReference type="ChEBI" id="CHEBI:57880"/>
    </ligand>
</feature>
<feature type="modified residue" description="Phosphoserine" evidence="3">
    <location>
        <position position="555"/>
    </location>
</feature>
<feature type="modified residue" description="Phosphoserine" evidence="3">
    <location>
        <position position="563"/>
    </location>
</feature>
<feature type="modified residue" description="Phosphoserine" evidence="1">
    <location>
        <position position="592"/>
    </location>
</feature>
<feature type="modified residue" description="Phosphoserine" evidence="3">
    <location>
        <position position="607"/>
    </location>
</feature>
<feature type="modified residue" description="Phosphoserine; by SGK1" evidence="2">
    <location>
        <position position="663"/>
    </location>
</feature>
<feature type="modified residue" description="Phosphoserine" evidence="2">
    <location>
        <position position="718"/>
    </location>
</feature>
<feature type="modified residue" description="Phosphoserine" evidence="1">
    <location>
        <position position="810"/>
    </location>
</feature>
<feature type="modified residue" description="Phosphoserine" evidence="1">
    <location>
        <position position="813"/>
    </location>
</feature>
<feature type="glycosylation site" description="N-linked (GlcNAc...) asparagine" evidence="5">
    <location>
        <position position="241"/>
    </location>
</feature>
<feature type="splice variant" id="VSP_053989" description="In isoform 2." evidence="17">
    <location>
        <begin position="452"/>
        <end position="460"/>
    </location>
</feature>
<feature type="sequence variant" id="VAR_076419" description="In DIAR8; uncertain significance; does not affect cell membrane localization; reduces weakly Na(+)/H(+) exchange activity; dbSNP:rs1047334552." evidence="13">
    <original>A</original>
    <variation>T</variation>
    <location>
        <position position="127"/>
    </location>
</feature>
<feature type="sequence variant" id="VAR_076420" description="In DIAR8; decreases cell membrane expression; reduces Na(+)/H(+) exchange activity; dbSNP:rs869312807." evidence="13">
    <original>A</original>
    <variation>T</variation>
    <location>
        <position position="269"/>
    </location>
</feature>
<feature type="sequence variant" id="VAR_076421" description="In DIAR8; decreases cell membrane expression; strongly reduces Na(+)/H(+) exchange activity; dbSNP:rs869312806." evidence="13">
    <original>A</original>
    <variation>V</variation>
    <location>
        <position position="311"/>
    </location>
</feature>
<feature type="sequence variant" id="VAR_088073" description="In DIAR8; uncertain significance; dbSNP:rs766583286." evidence="14">
    <original>E</original>
    <variation>K</variation>
    <location>
        <position position="347"/>
    </location>
</feature>
<feature type="sequence variant" id="VAR_076422" description="In DIAR8; decreases cell membrane localization; strongly reduces Na(+)/H(+) exchange activity; dbSNP:rs766076524." evidence="13">
    <original>R</original>
    <variation>Q</variation>
    <location>
        <position position="382"/>
    </location>
</feature>
<feature type="sequence variant" id="VAR_060593" description="In dbSNP:rs2247114." evidence="7 16">
    <original>C</original>
    <variation>R</variation>
    <location>
        <position position="799"/>
    </location>
</feature>
<feature type="mutagenesis site" description="Abolishes sodium:proton antiporter activity. Does not affect cell membrane expression or localization to recycling endosomes." evidence="15">
    <original>R</original>
    <variation>A</variation>
    <variation>D</variation>
    <location>
        <position position="397"/>
    </location>
</feature>
<feature type="mutagenesis site" description="Increases sodium:proton antiporter activity." evidence="15">
    <original>H</original>
    <variation>A</variation>
    <variation>D</variation>
    <location>
        <position position="500"/>
    </location>
</feature>
<feature type="mutagenesis site" description="Decreases cell membrane expression. Increases sodium:proton antiporter activity." evidence="15">
    <original>Y</original>
    <variation>A</variation>
    <location>
        <position position="635"/>
    </location>
</feature>
<feature type="mutagenesis site" description="Increases sodium:proton antiporter activity; when associated with A-638." evidence="15">
    <original>R</original>
    <variation>A</variation>
    <location>
        <position position="637"/>
    </location>
</feature>
<feature type="mutagenesis site" description="Increases sodium:proton antiporter activity; when associated with A-638." evidence="15">
    <original>H</original>
    <variation>A</variation>
    <location>
        <position position="638"/>
    </location>
</feature>
<feature type="turn" evidence="23">
    <location>
        <begin position="49"/>
        <end position="51"/>
    </location>
</feature>
<feature type="helix" evidence="23">
    <location>
        <begin position="54"/>
        <end position="72"/>
    </location>
</feature>
<feature type="helix" evidence="23">
    <location>
        <begin position="76"/>
        <end position="79"/>
    </location>
</feature>
<feature type="helix" evidence="23">
    <location>
        <begin position="84"/>
        <end position="101"/>
    </location>
</feature>
<feature type="helix" evidence="23">
    <location>
        <begin position="105"/>
        <end position="107"/>
    </location>
</feature>
<feature type="helix" evidence="23">
    <location>
        <begin position="112"/>
        <end position="115"/>
    </location>
</feature>
<feature type="turn" evidence="23">
    <location>
        <begin position="116"/>
        <end position="119"/>
    </location>
</feature>
<feature type="helix" evidence="23">
    <location>
        <begin position="120"/>
        <end position="129"/>
    </location>
</feature>
<feature type="helix" evidence="23">
    <location>
        <begin position="133"/>
        <end position="138"/>
    </location>
</feature>
<feature type="helix" evidence="23">
    <location>
        <begin position="140"/>
        <end position="147"/>
    </location>
</feature>
<feature type="helix" evidence="23">
    <location>
        <begin position="149"/>
        <end position="167"/>
    </location>
</feature>
<feature type="helix" evidence="23">
    <location>
        <begin position="178"/>
        <end position="188"/>
    </location>
</feature>
<feature type="helix" evidence="23">
    <location>
        <begin position="193"/>
        <end position="196"/>
    </location>
</feature>
<feature type="helix" evidence="23">
    <location>
        <begin position="197"/>
        <end position="200"/>
    </location>
</feature>
<feature type="turn" evidence="23">
    <location>
        <begin position="201"/>
        <end position="203"/>
    </location>
</feature>
<feature type="helix" evidence="23">
    <location>
        <begin position="207"/>
        <end position="237"/>
    </location>
</feature>
<feature type="turn" evidence="23">
    <location>
        <begin position="239"/>
        <end position="241"/>
    </location>
</feature>
<feature type="helix" evidence="23">
    <location>
        <begin position="244"/>
        <end position="275"/>
    </location>
</feature>
<feature type="helix" evidence="23">
    <location>
        <begin position="276"/>
        <end position="278"/>
    </location>
</feature>
<feature type="helix" evidence="23">
    <location>
        <begin position="286"/>
        <end position="303"/>
    </location>
</feature>
<feature type="helix" evidence="23">
    <location>
        <begin position="308"/>
        <end position="317"/>
    </location>
</feature>
<feature type="turn" evidence="23">
    <location>
        <begin position="318"/>
        <end position="325"/>
    </location>
</feature>
<feature type="helix" evidence="23">
    <location>
        <begin position="329"/>
        <end position="359"/>
    </location>
</feature>
<feature type="turn" evidence="23">
    <location>
        <begin position="361"/>
        <end position="363"/>
    </location>
</feature>
<feature type="helix" evidence="23">
    <location>
        <begin position="368"/>
        <end position="394"/>
    </location>
</feature>
<feature type="helix" evidence="23">
    <location>
        <begin position="403"/>
        <end position="410"/>
    </location>
</feature>
<feature type="helix" evidence="23">
    <location>
        <begin position="417"/>
        <end position="424"/>
    </location>
</feature>
<feature type="turn" evidence="23">
    <location>
        <begin position="428"/>
        <end position="430"/>
    </location>
</feature>
<feature type="helix" evidence="23">
    <location>
        <begin position="434"/>
        <end position="463"/>
    </location>
</feature>
<feature type="helix" evidence="23">
    <location>
        <begin position="475"/>
        <end position="494"/>
    </location>
</feature>
<feature type="helix" evidence="23">
    <location>
        <begin position="501"/>
        <end position="513"/>
    </location>
</feature>
<feature type="helix" evidence="23">
    <location>
        <begin position="515"/>
        <end position="519"/>
    </location>
</feature>
<feature type="helix" evidence="23">
    <location>
        <begin position="522"/>
        <end position="536"/>
    </location>
</feature>
<feature type="helix" evidence="23">
    <location>
        <begin position="618"/>
        <end position="623"/>
    </location>
</feature>
<feature type="helix" evidence="23">
    <location>
        <begin position="628"/>
        <end position="630"/>
    </location>
</feature>
<feature type="strand" evidence="23">
    <location>
        <begin position="637"/>
        <end position="639"/>
    </location>
</feature>
<feature type="helix" evidence="23">
    <location>
        <begin position="646"/>
        <end position="660"/>
    </location>
</feature>
<feature type="turn" evidence="23">
    <location>
        <begin position="661"/>
        <end position="664"/>
    </location>
</feature>
<organism>
    <name type="scientific">Homo sapiens</name>
    <name type="common">Human</name>
    <dbReference type="NCBI Taxonomy" id="9606"/>
    <lineage>
        <taxon>Eukaryota</taxon>
        <taxon>Metazoa</taxon>
        <taxon>Chordata</taxon>
        <taxon>Craniata</taxon>
        <taxon>Vertebrata</taxon>
        <taxon>Euteleostomi</taxon>
        <taxon>Mammalia</taxon>
        <taxon>Eutheria</taxon>
        <taxon>Euarchontoglires</taxon>
        <taxon>Primates</taxon>
        <taxon>Haplorrhini</taxon>
        <taxon>Catarrhini</taxon>
        <taxon>Hominidae</taxon>
        <taxon>Homo</taxon>
    </lineage>
</organism>
<gene>
    <name evidence="20" type="primary">SLC9A3</name>
    <name evidence="18" type="synonym">NHE3</name>
</gene>
<sequence length="834" mass="92855">MWGLGARGPDRGLLLALALGGLARAGGVEVEPGGAHGESGGFQVVTFEWAHVQDPYVIALWILVASLAKIGFHLSHKVTSVVPESALLIVLGLVLGGIVWAADHIASFTLTPTVFFFYLLPPIVLDAGYFMPNRLFFGNLGTILLYAVVGTVWNAATTGLSLYGVFLSGLMGDLQIGLLDFLLFGSLMAAVDPVAVLAVFEEVHVNEVLFIIVFGESLLNDAVTVVLYNVFESFVALGGDNVTGVDCVKGIVSFFVVSLGGTLVGVVFAFLLSLVTRFTKHVRIIEPGFVFIISYLSYLTSEMLSLSAILAITFCGICCQKYVKANISEQSATTVRYTMKMLASSAETIIFMFLGISAVNPFIWTWNTAFVLLTLVFISVYRAIGVVLQTWLLNRYRMVQLEPIDQVVLSYGGLRGAVAFALVVLLDGDKVKEKNLFVSTTIIVVFFTVIFQGLTIKPLVQWLKVKRSEHREPRLNEKLHGRAFDHILSAIEDISGQIGHNYLRDKWSHFDRKFLSRVLMRRSAQKSRDRILNVFHELNLKDAISYVAEGERRGSLAFIRSPSTDNVVNVDFTPRSSTVEASVSYLLRENVSAVCLDMQSLEQRRRSIRDAEDMVTHHTLQQYLYKPRQEYKHLYSRHELTPTEDEKQDREIFHRTMRKRLESFKSTKLGLNQNKKAAKLYKRERAQKRRNSSIPNGKLPMESPAQNFTIKEKDLELSDTEEPPNYDEEMSGGIEFLASVTKDTASDSPAGIDNPVFSPDEALDRSLLARLPPWLSPGETVVPSQRARTQIPYSPGTFCRLMPFRLSSKSVDSFLQADGPEERPPAALPESTHM</sequence>
<name>SL9A3_HUMAN</name>
<reference key="1">
    <citation type="journal article" date="1995" name="Am. J. Physiol.">
        <title>Cloning, tissue distribution, and functional analysis of the human Na+/N+ exchanger isoform, NHE3.</title>
        <authorList>
            <person name="Brant S.R."/>
            <person name="Yun C.H."/>
            <person name="Donowitz M."/>
            <person name="Tse C.-M."/>
        </authorList>
    </citation>
    <scope>NUCLEOTIDE SEQUENCE [MRNA] (ISOFORM 1)</scope>
    <scope>VARIANT ARG-799</scope>
    <source>
        <tissue>Kidney cortex</tissue>
    </source>
</reference>
<reference key="2">
    <citation type="journal article" date="2004" name="Nature">
        <title>The DNA sequence and comparative analysis of human chromosome 5.</title>
        <authorList>
            <person name="Schmutz J."/>
            <person name="Martin J."/>
            <person name="Terry A."/>
            <person name="Couronne O."/>
            <person name="Grimwood J."/>
            <person name="Lowry S."/>
            <person name="Gordon L.A."/>
            <person name="Scott D."/>
            <person name="Xie G."/>
            <person name="Huang W."/>
            <person name="Hellsten U."/>
            <person name="Tran-Gyamfi M."/>
            <person name="She X."/>
            <person name="Prabhakar S."/>
            <person name="Aerts A."/>
            <person name="Altherr M."/>
            <person name="Bajorek E."/>
            <person name="Black S."/>
            <person name="Branscomb E."/>
            <person name="Caoile C."/>
            <person name="Challacombe J.F."/>
            <person name="Chan Y.M."/>
            <person name="Denys M."/>
            <person name="Detter J.C."/>
            <person name="Escobar J."/>
            <person name="Flowers D."/>
            <person name="Fotopulos D."/>
            <person name="Glavina T."/>
            <person name="Gomez M."/>
            <person name="Gonzales E."/>
            <person name="Goodstein D."/>
            <person name="Grigoriev I."/>
            <person name="Groza M."/>
            <person name="Hammon N."/>
            <person name="Hawkins T."/>
            <person name="Haydu L."/>
            <person name="Israni S."/>
            <person name="Jett J."/>
            <person name="Kadner K."/>
            <person name="Kimball H."/>
            <person name="Kobayashi A."/>
            <person name="Lopez F."/>
            <person name="Lou Y."/>
            <person name="Martinez D."/>
            <person name="Medina C."/>
            <person name="Morgan J."/>
            <person name="Nandkeshwar R."/>
            <person name="Noonan J.P."/>
            <person name="Pitluck S."/>
            <person name="Pollard M."/>
            <person name="Predki P."/>
            <person name="Priest J."/>
            <person name="Ramirez L."/>
            <person name="Retterer J."/>
            <person name="Rodriguez A."/>
            <person name="Rogers S."/>
            <person name="Salamov A."/>
            <person name="Salazar A."/>
            <person name="Thayer N."/>
            <person name="Tice H."/>
            <person name="Tsai M."/>
            <person name="Ustaszewska A."/>
            <person name="Vo N."/>
            <person name="Wheeler J."/>
            <person name="Wu K."/>
            <person name="Yang J."/>
            <person name="Dickson M."/>
            <person name="Cheng J.-F."/>
            <person name="Eichler E.E."/>
            <person name="Olsen A."/>
            <person name="Pennacchio L.A."/>
            <person name="Rokhsar D.S."/>
            <person name="Richardson P."/>
            <person name="Lucas S.M."/>
            <person name="Myers R.M."/>
            <person name="Rubin E.M."/>
        </authorList>
    </citation>
    <scope>NUCLEOTIDE SEQUENCE [LARGE SCALE GENOMIC DNA]</scope>
</reference>
<reference key="3">
    <citation type="journal article" date="2004" name="Genome Res.">
        <title>The status, quality, and expansion of the NIH full-length cDNA project: the Mammalian Gene Collection (MGC).</title>
        <authorList>
            <consortium name="The MGC Project Team"/>
        </authorList>
    </citation>
    <scope>NUCLEOTIDE SEQUENCE [LARGE SCALE MRNA] (ISOFORMS 1 AND 2)</scope>
    <scope>VARIANT ARG-799</scope>
    <source>
        <tissue>Colon</tissue>
    </source>
</reference>
<reference key="4">
    <citation type="journal article" date="2008" name="Cell. Physiol. Biochem.">
        <title>Elevated intracellular calcium stimulates NHE3 activity by an IKEPP (NHERF4) dependent mechanism.</title>
        <authorList>
            <person name="Zachos N.C."/>
            <person name="Hodson C."/>
            <person name="Kovbasnjuk O."/>
            <person name="Li X."/>
            <person name="Thelin W.R."/>
            <person name="Cha B."/>
            <person name="Milgram S."/>
            <person name="Donowitz M."/>
        </authorList>
    </citation>
    <scope>SUBCELLULAR LOCATION</scope>
    <scope>INTERACTION WITH NHERF4</scope>
</reference>
<reference key="5">
    <citation type="journal article" date="2008" name="J. Biol. Chem.">
        <title>IRBIT, inositol 1,4,5-triphosphate (IP3) receptor-binding protein released with IP3, binds Na+/H+ exchanger NHE3 and activates NHE3 activity in response to calcium.</title>
        <authorList>
            <person name="He P."/>
            <person name="Zhang H."/>
            <person name="Yun C.C."/>
        </authorList>
    </citation>
    <scope>INTERACTION WITH AHCYL1</scope>
    <scope>FUNCTION</scope>
    <scope>ACTIVITY REGULATION</scope>
</reference>
<reference key="6">
    <citation type="journal article" date="2010" name="J. Biol. Chem.">
        <title>Activation of Na+/H+ exchanger NHE3 by angiotensin II is mediated by inositol 1,4,5-triphosphate (IP3) receptor-binding protein released with IP3 (IRBIT) and Ca2+/calmodulin-dependent protein kinase II.</title>
        <authorList>
            <person name="He P."/>
            <person name="Klein J."/>
            <person name="Yun C.C."/>
        </authorList>
    </citation>
    <scope>INTERACTION WITH AHCYL1</scope>
</reference>
<reference key="7">
    <citation type="journal article" date="2014" name="Sci. Transl. Med.">
        <title>Intestinal inhibition of the Na+/H+ exchanger 3 prevents cardiorenal damage in rats and inhibits Na+ uptake in humans.</title>
        <authorList>
            <person name="Spencer A.G."/>
            <person name="Labonte E.D."/>
            <person name="Rosenbaum D.P."/>
            <person name="Plato C.F."/>
            <person name="Carreras C.W."/>
            <person name="Leadbetter M.R."/>
            <person name="Kozuka K."/>
            <person name="Kohler J."/>
            <person name="Koo-McCoy S."/>
            <person name="He L."/>
            <person name="Bell N."/>
            <person name="Tabora J."/>
            <person name="Joly K.M."/>
            <person name="Navre M."/>
            <person name="Jacobs J.W."/>
            <person name="Charmot D."/>
        </authorList>
    </citation>
    <scope>ACTIVITY REGULATION</scope>
    <scope>FUNCTION</scope>
    <scope>TRANSPORTER ACTIVITY</scope>
</reference>
<reference key="8">
    <citation type="journal article" date="2015" name="Hum. Mol. Genet.">
        <title>Reduced sodium/proton exchanger NHE3 activity causes congenital sodium diarrhea.</title>
        <authorList>
            <person name="Janecke A.R."/>
            <person name="Heinz-Erian P."/>
            <person name="Yin J."/>
            <person name="Petersen B.S."/>
            <person name="Franke A."/>
            <person name="Lechner S."/>
            <person name="Fuchs I."/>
            <person name="Melancon S."/>
            <person name="Uhlig H.H."/>
            <person name="Travis S."/>
            <person name="Marinier E."/>
            <person name="Perisic V."/>
            <person name="Ristic N."/>
            <person name="Gerner P."/>
            <person name="Booth I.W."/>
            <person name="Wedenoja S."/>
            <person name="Baumgartner N."/>
            <person name="Vodopiutz J."/>
            <person name="Frechette-Duval M.C."/>
            <person name="De Lafollie J."/>
            <person name="Persad R."/>
            <person name="Warner N."/>
            <person name="Tse C.M."/>
            <person name="Sud K."/>
            <person name="Zachos N.C."/>
            <person name="Sarker R."/>
            <person name="Zhu X."/>
            <person name="Muise A.M."/>
            <person name="Zimmer K.P."/>
            <person name="Witt H."/>
            <person name="Zoller H."/>
            <person name="Donowitz M."/>
            <person name="Mueller T."/>
        </authorList>
    </citation>
    <scope>FUNCTION</scope>
    <scope>TRANSPORTER ACTIVITY</scope>
    <scope>SUBCELLULAR LOCATION</scope>
    <scope>VARIANTS DIAR8 THR-127; THR-269; VAL-311 AND GLN-382</scope>
    <scope>CHARACTERIZATION OF VARIANTS DIAR8 THR-127; THR-269; VAL-311 AND GLN-382</scope>
</reference>
<reference key="9">
    <citation type="journal article" date="2015" name="Mol. Biol. Cell">
        <title>Sorting nexin 27 regulates basal and stimulated brush border trafficking of NHE3.</title>
        <authorList>
            <person name="Singh V."/>
            <person name="Yang J."/>
            <person name="Cha B."/>
            <person name="Chen T.E."/>
            <person name="Sarker R."/>
            <person name="Yin J."/>
            <person name="Avula L.R."/>
            <person name="Tse M."/>
            <person name="Donowitz M."/>
        </authorList>
    </citation>
    <scope>INTERACTION WITH SNX27</scope>
    <scope>SUBCELLULAR LOCATION</scope>
</reference>
<reference evidence="22" key="10">
    <citation type="journal article" date="2022" name="Sci. Adv.">
        <title>Structural basis of autoinhibition of the human NHE3-CHP1 complex.</title>
        <authorList>
            <person name="Dong Y."/>
            <person name="Li H."/>
            <person name="Ilie A."/>
            <person name="Gao Y."/>
            <person name="Boucher A."/>
            <person name="Zhang X.C."/>
            <person name="Orlowski J."/>
            <person name="Zhao Y."/>
        </authorList>
    </citation>
    <scope>STRUCTURE BY ELECTRON MICROSCOPY (3.20 ANGSTROMS) OF 40-665 IN COMPLEX WITH CHIP1 AND A PHOSPHATIDYLINOSITOL</scope>
    <scope>SUBCELLULAR LOCATION</scope>
    <scope>SUBUNIT</scope>
    <scope>FUNCTION</scope>
    <scope>TRANSPORTER ACTIVITY</scope>
    <scope>MUTAGENESIS OF ARG-397; HIS-500; TYR-635; ARG-637 AND HIS-638</scope>
    <scope>ACTIVITY REGULATION</scope>
</reference>
<reference key="11">
    <citation type="journal article" date="2019" name="Eur. J. Med. Genet.">
        <title>Congenital sodium diarrhea by mutation of the SLC9A3 gene.</title>
        <authorList>
            <person name="Dimitrov G."/>
            <person name="Bamberger S."/>
            <person name="Navard C."/>
            <person name="Dreux S."/>
            <person name="Badens C."/>
            <person name="Bourgeois P."/>
            <person name="Buffat C."/>
            <person name="Hugot J.P."/>
            <person name="Fabre A."/>
        </authorList>
    </citation>
    <scope>VARIANT DIAR8 LYS-347</scope>
</reference>